<accession>Q8NGU1</accession>
<evidence type="ECO:0000255" key="1"/>
<evidence type="ECO:0000255" key="2">
    <source>
        <dbReference type="PROSITE-ProRule" id="PRU00521"/>
    </source>
</evidence>
<evidence type="ECO:0000305" key="3"/>
<proteinExistence type="evidence at transcript level"/>
<gene>
    <name type="primary">OR9A1P</name>
    <name type="synonym">OR9A1</name>
</gene>
<organism>
    <name type="scientific">Homo sapiens</name>
    <name type="common">Human</name>
    <dbReference type="NCBI Taxonomy" id="9606"/>
    <lineage>
        <taxon>Eukaryota</taxon>
        <taxon>Metazoa</taxon>
        <taxon>Chordata</taxon>
        <taxon>Craniata</taxon>
        <taxon>Vertebrata</taxon>
        <taxon>Euteleostomi</taxon>
        <taxon>Mammalia</taxon>
        <taxon>Eutheria</taxon>
        <taxon>Euarchontoglires</taxon>
        <taxon>Primates</taxon>
        <taxon>Haplorrhini</taxon>
        <taxon>Catarrhini</taxon>
        <taxon>Hominidae</taxon>
        <taxon>Homo</taxon>
    </lineage>
</organism>
<protein>
    <recommendedName>
        <fullName>Olfactory receptor 9A1</fullName>
    </recommendedName>
    <alternativeName>
        <fullName>HSHTPRX06</fullName>
    </alternativeName>
</protein>
<reference key="1">
    <citation type="submission" date="2001-07" db="EMBL/GenBank/DDBJ databases">
        <title>Genome-wide discovery and analysis of human seven transmembrane helix receptor genes.</title>
        <authorList>
            <person name="Suwa M."/>
            <person name="Sato T."/>
            <person name="Okouchi I."/>
            <person name="Arita M."/>
            <person name="Futami K."/>
            <person name="Matsumoto S."/>
            <person name="Tsutsumi S."/>
            <person name="Aburatani H."/>
            <person name="Asai K."/>
            <person name="Akiyama Y."/>
        </authorList>
    </citation>
    <scope>NUCLEOTIDE SEQUENCE [GENOMIC DNA]</scope>
</reference>
<reference key="2">
    <citation type="journal article" date="1992" name="Nature">
        <title>Expression of members of the putative olfactory receptor gene family in mammalian germ cells.</title>
        <authorList>
            <person name="Parmentier M."/>
            <person name="Libert F."/>
            <person name="Schurmans S."/>
            <person name="Schiffmann S."/>
            <person name="Lefort A."/>
            <person name="Eggerickx D."/>
            <person name="Ledent C."/>
            <person name="Mollereau C."/>
            <person name="Gerard C."/>
            <person name="Perret J."/>
            <person name="Grootegoed A."/>
            <person name="Vassart G."/>
        </authorList>
    </citation>
    <scope>NUCLEOTIDE SEQUENCE [MRNA] OF 127-239</scope>
    <source>
        <tissue>Testis</tissue>
    </source>
</reference>
<sequence length="314" mass="35431">MLGNYSSATEFFLLGFPGSQEVCRILFATFFLLYAVTVMGNVVIIITVCVDKCLQSPIYFFLGHLCVLEILITSTAVPFMLWGLLLPSTQIMSLTACAAQLYLYLSLGTLELALMGVMAVDRYVAVCNPLRYNIIMNSSTFIWVIIVSWVLGFLSEIWPVYATFQLTFCKSSVLDHFYCDRGQLLKVSCEDTLFREFILFLMAVFIIIGSLIPTIVSYTYIISTNLKIPSASGWRKSFSTCASHFTYVVIGYGSCLFLYVKPKQTQAAEYNRVVSLLVLVVTPFLNPFIFTLRNDKFIQAFGDGMKHCYKLLKN</sequence>
<feature type="chain" id="PRO_0000345417" description="Olfactory receptor 9A1">
    <location>
        <begin position="1"/>
        <end position="314"/>
    </location>
</feature>
<feature type="topological domain" description="Extracellular" evidence="1">
    <location>
        <begin position="1"/>
        <end position="24"/>
    </location>
</feature>
<feature type="transmembrane region" description="Helical; Name=1" evidence="1">
    <location>
        <begin position="25"/>
        <end position="45"/>
    </location>
</feature>
<feature type="topological domain" description="Cytoplasmic" evidence="1">
    <location>
        <begin position="46"/>
        <end position="64"/>
    </location>
</feature>
<feature type="transmembrane region" description="Helical; Name=2" evidence="1">
    <location>
        <begin position="65"/>
        <end position="85"/>
    </location>
</feature>
<feature type="topological domain" description="Extracellular" evidence="1">
    <location>
        <begin position="86"/>
        <end position="99"/>
    </location>
</feature>
<feature type="transmembrane region" description="Helical; Name=3" evidence="1">
    <location>
        <begin position="100"/>
        <end position="120"/>
    </location>
</feature>
<feature type="topological domain" description="Cytoplasmic" evidence="1">
    <location>
        <begin position="121"/>
        <end position="140"/>
    </location>
</feature>
<feature type="transmembrane region" description="Helical; Name=4" evidence="1">
    <location>
        <begin position="141"/>
        <end position="161"/>
    </location>
</feature>
<feature type="topological domain" description="Extracellular" evidence="1">
    <location>
        <begin position="162"/>
        <end position="196"/>
    </location>
</feature>
<feature type="transmembrane region" description="Helical; Name=5" evidence="1">
    <location>
        <begin position="197"/>
        <end position="217"/>
    </location>
</feature>
<feature type="topological domain" description="Cytoplasmic" evidence="1">
    <location>
        <begin position="218"/>
        <end position="239"/>
    </location>
</feature>
<feature type="transmembrane region" description="Helical; Name=6" evidence="1">
    <location>
        <begin position="240"/>
        <end position="260"/>
    </location>
</feature>
<feature type="topological domain" description="Extracellular" evidence="1">
    <location>
        <begin position="261"/>
        <end position="271"/>
    </location>
</feature>
<feature type="transmembrane region" description="Helical; Name=7" evidence="1">
    <location>
        <begin position="272"/>
        <end position="292"/>
    </location>
</feature>
<feature type="topological domain" description="Cytoplasmic" evidence="1">
    <location>
        <begin position="293"/>
        <end position="314"/>
    </location>
</feature>
<feature type="glycosylation site" description="N-linked (GlcNAc...) asparagine" evidence="1">
    <location>
        <position position="4"/>
    </location>
</feature>
<feature type="disulfide bond" evidence="2">
    <location>
        <begin position="97"/>
        <end position="179"/>
    </location>
</feature>
<dbReference type="EMBL" id="AB065690">
    <property type="protein sequence ID" value="BAC05913.1"/>
    <property type="status" value="ALT_INIT"/>
    <property type="molecule type" value="Genomic_DNA"/>
</dbReference>
<dbReference type="EMBL" id="X64982">
    <property type="status" value="NOT_ANNOTATED_CDS"/>
    <property type="molecule type" value="mRNA"/>
</dbReference>
<dbReference type="SMR" id="Q8NGU1"/>
<dbReference type="GlyCosmos" id="Q8NGU1">
    <property type="glycosylation" value="1 site, No reported glycans"/>
</dbReference>
<dbReference type="GlyGen" id="Q8NGU1">
    <property type="glycosylation" value="1 site"/>
</dbReference>
<dbReference type="BioMuta" id="HGNC:8486"/>
<dbReference type="DMDM" id="206558310"/>
<dbReference type="AGR" id="HGNC:8486"/>
<dbReference type="GeneCards" id="OR9A1P"/>
<dbReference type="HGNC" id="HGNC:8486">
    <property type="gene designation" value="OR9A1P"/>
</dbReference>
<dbReference type="neXtProt" id="NX_Q8NGU1"/>
<dbReference type="InParanoid" id="Q8NGU1"/>
<dbReference type="OrthoDB" id="6162029at2759"/>
<dbReference type="PAN-GO" id="Q8NGU1">
    <property type="GO annotations" value="0 GO annotations based on evolutionary models"/>
</dbReference>
<dbReference type="PhylomeDB" id="Q8NGU1"/>
<dbReference type="PathwayCommons" id="Q8NGU1"/>
<dbReference type="Pharos" id="Q8NGU1">
    <property type="development level" value="Tdark"/>
</dbReference>
<dbReference type="PRO" id="PR:Q8NGU1"/>
<dbReference type="Proteomes" id="UP000005640">
    <property type="component" value="Unplaced"/>
</dbReference>
<dbReference type="RNAct" id="Q8NGU1">
    <property type="molecule type" value="protein"/>
</dbReference>
<dbReference type="GO" id="GO:0005886">
    <property type="term" value="C:plasma membrane"/>
    <property type="evidence" value="ECO:0007669"/>
    <property type="project" value="UniProtKB-SubCell"/>
</dbReference>
<dbReference type="GO" id="GO:0004930">
    <property type="term" value="F:G protein-coupled receptor activity"/>
    <property type="evidence" value="ECO:0007669"/>
    <property type="project" value="UniProtKB-KW"/>
</dbReference>
<dbReference type="GO" id="GO:0004984">
    <property type="term" value="F:olfactory receptor activity"/>
    <property type="evidence" value="ECO:0007669"/>
    <property type="project" value="InterPro"/>
</dbReference>
<dbReference type="FunFam" id="1.20.1070.10:FF:000015">
    <property type="entry name" value="Olfactory receptor"/>
    <property type="match status" value="1"/>
</dbReference>
<dbReference type="Gene3D" id="1.20.1070.10">
    <property type="entry name" value="Rhodopsin 7-helix transmembrane proteins"/>
    <property type="match status" value="1"/>
</dbReference>
<dbReference type="InterPro" id="IPR000276">
    <property type="entry name" value="GPCR_Rhodpsn"/>
</dbReference>
<dbReference type="InterPro" id="IPR017452">
    <property type="entry name" value="GPCR_Rhodpsn_7TM"/>
</dbReference>
<dbReference type="InterPro" id="IPR000725">
    <property type="entry name" value="Olfact_rcpt"/>
</dbReference>
<dbReference type="InterPro" id="IPR047132">
    <property type="entry name" value="Olfact_rcpt_6C-like"/>
</dbReference>
<dbReference type="PANTHER" id="PTHR26454">
    <property type="entry name" value="OLFACTORY RECEPTOR"/>
    <property type="match status" value="1"/>
</dbReference>
<dbReference type="PANTHER" id="PTHR26454:SF10">
    <property type="entry name" value="OLFACTORY RECEPTOR 6V1"/>
    <property type="match status" value="1"/>
</dbReference>
<dbReference type="Pfam" id="PF13853">
    <property type="entry name" value="7tm_4"/>
    <property type="match status" value="1"/>
</dbReference>
<dbReference type="PRINTS" id="PR00237">
    <property type="entry name" value="GPCRRHODOPSN"/>
</dbReference>
<dbReference type="PRINTS" id="PR00245">
    <property type="entry name" value="OLFACTORYR"/>
</dbReference>
<dbReference type="SUPFAM" id="SSF81321">
    <property type="entry name" value="Family A G protein-coupled receptor-like"/>
    <property type="match status" value="1"/>
</dbReference>
<dbReference type="PROSITE" id="PS00237">
    <property type="entry name" value="G_PROTEIN_RECEP_F1_1"/>
    <property type="match status" value="1"/>
</dbReference>
<dbReference type="PROSITE" id="PS50262">
    <property type="entry name" value="G_PROTEIN_RECEP_F1_2"/>
    <property type="match status" value="1"/>
</dbReference>
<comment type="function">
    <text evidence="3">Odorant receptor.</text>
</comment>
<comment type="subcellular location">
    <subcellularLocation>
        <location>Cell membrane</location>
        <topology>Multi-pass membrane protein</topology>
    </subcellularLocation>
</comment>
<comment type="polymorphism">
    <text evidence="3">A stop codon in the gene coding for this protein at position Glu-264 is responsible for functional diversity thus producing a pseudogene. The frequency of the functional allele appears to be low and present mainly in African populations.</text>
</comment>
<comment type="similarity">
    <text evidence="2">Belongs to the G-protein coupled receptor 1 family.</text>
</comment>
<comment type="sequence caution" evidence="3">
    <conflict type="erroneous initiation">
        <sequence resource="EMBL-CDS" id="BAC05913"/>
    </conflict>
</comment>
<comment type="online information" name="Human Olfactory Receptor Data Exploratorium (HORDE)">
    <link uri="http://genome.weizmann.ac.il/horde/card/index/symbol:OR9A1P"/>
</comment>
<name>OR9A1_HUMAN</name>
<keyword id="KW-1003">Cell membrane</keyword>
<keyword id="KW-1015">Disulfide bond</keyword>
<keyword id="KW-0297">G-protein coupled receptor</keyword>
<keyword id="KW-0325">Glycoprotein</keyword>
<keyword id="KW-0472">Membrane</keyword>
<keyword id="KW-0552">Olfaction</keyword>
<keyword id="KW-0675">Receptor</keyword>
<keyword id="KW-1185">Reference proteome</keyword>
<keyword id="KW-0716">Sensory transduction</keyword>
<keyword id="KW-0807">Transducer</keyword>
<keyword id="KW-0812">Transmembrane</keyword>
<keyword id="KW-1133">Transmembrane helix</keyword>